<name>MET_PONAB</name>
<comment type="function">
    <text evidence="1">Receptor tyrosine kinase that transduces signals from the extracellular matrix into the cytoplasm by binding to hepatocyte growth factor/HGF ligand. Regulates many physiological processes including proliferation, scattering, morphogenesis and survival. Ligand binding at the cell surface induces autophosphorylation of MET on its intracellular domain that provides docking sites for downstream signaling molecules. Following activation by ligand, interacts with the PI3-kinase subunit PIK3R1, PLCG1, SRC, GRB2, STAT3 or the adapter GAB1. Recruitment of these downstream effectors by MET leads to the activation of several signaling cascades including the RAS-ERK, PI3 kinase-AKT, or PLCgamma-PKC. The RAS-ERK activation is associated with the morphogenetic effects while PI3K/AKT coordinates prosurvival effects. During embryonic development, MET signaling plays a role in gastrulation, development and migration of muscles and neuronal precursors, angiogenesis and kidney formation. In adults, participates in wound healing as well as organ regeneration and tissue remodeling. Also promotes differentiation and proliferation of hematopoietic cells (By similarity).</text>
</comment>
<comment type="catalytic activity">
    <reaction evidence="7">
        <text>L-tyrosyl-[protein] + ATP = O-phospho-L-tyrosyl-[protein] + ADP + H(+)</text>
        <dbReference type="Rhea" id="RHEA:10596"/>
        <dbReference type="Rhea" id="RHEA-COMP:10136"/>
        <dbReference type="Rhea" id="RHEA-COMP:20101"/>
        <dbReference type="ChEBI" id="CHEBI:15378"/>
        <dbReference type="ChEBI" id="CHEBI:30616"/>
        <dbReference type="ChEBI" id="CHEBI:46858"/>
        <dbReference type="ChEBI" id="CHEBI:61978"/>
        <dbReference type="ChEBI" id="CHEBI:456216"/>
        <dbReference type="EC" id="2.7.10.1"/>
    </reaction>
</comment>
<comment type="activity regulation">
    <text evidence="1">In its inactive state, the C-terminal tail interacts with the catalytic domain and inhibits the kinase activity. Upon ligand binding, the C-terminal tail is displaced and becomes phosphorylated, thus increasing the kinase activity (By similarity).</text>
</comment>
<comment type="subunit">
    <text evidence="2 3">Heterodimer made of an alpha chain (50 kDa) and a beta chain (145 kDa) which are disulfide linked. Binds PLXNB1. Interacts when phosphorylated with downstream effectors including STAT3, PIK3R1, SRC, PCLG1, GRB2 and GAB1. Interacts with SPSB1, SPSB2 and SPSB4. Interacts with INPP5D/SHIP1. When phosphorylated at Tyr-1356, interacts with INPPL1/SHIP2. Interacts with RANBP9 and RANBP10, as well as SPSB1, SPSB2, SPSB3 and SPSB4. SPSB1 binding occurs in the presence and in the absence of HGF, however HGF treatment has a positive effect on this interaction. Interacts with MUC20; prevents interaction with GRB2 and suppresses hepatocyte growth factor-induced cell proliferation. Interacts with GRB10. Interacts with PTPN1 and PTPN2. Interacts with HSP90AA1 and HSP90AB1; the interaction suppresses MET kinase activity. Interacts with tensin TNS3 (By similarity). Interacts (when phosphorylated) with tensin TNS4 (via SH2 domain); the interaction increases MET protein stability by inhibiting MET endocytosis and subsequent lysosomal degradation (By similarity).</text>
</comment>
<comment type="subcellular location">
    <subcellularLocation>
        <location evidence="1">Membrane</location>
        <topology evidence="1">Single-pass type I membrane protein</topology>
    </subcellularLocation>
</comment>
<comment type="domain">
    <text evidence="1">The kinase domain is involved in SPSB1 binding.</text>
</comment>
<comment type="domain">
    <text evidence="1">The beta-propeller Sema domain mediates binding to HGF.</text>
</comment>
<comment type="PTM">
    <text evidence="2">Autophosphorylated in response to ligand binding on Tyr-1234 and Tyr-1235 in the kinase domain leading to further phosphorylation of Tyr-1349 and Tyr-1356 in the C-terminal multifunctional docking site. Dephosphorylated by PTPRJ at Tyr-1349 and Tyr-1365. Dephosphorylated by PTPN1 and PTPN2 (By similarity).</text>
</comment>
<comment type="PTM">
    <text evidence="2">Ubiquitinated. Ubiquitination by CBL regulates the receptor stability and activity through proteasomal degradation (By similarity).</text>
</comment>
<comment type="PTM">
    <text evidence="2">O-mannosylation of IPT/TIG domains by TMEM260 is required for protein maturation. O-mannosylated residues are composed of single mannose glycans that are not elongated or modified.</text>
</comment>
<comment type="similarity">
    <text evidence="5">Belongs to the protein kinase superfamily. Tyr protein kinase family.</text>
</comment>
<protein>
    <recommendedName>
        <fullName>Hepatocyte growth factor receptor</fullName>
        <shortName>HGF receptor</shortName>
        <ecNumber>2.7.10.1</ecNumber>
    </recommendedName>
    <alternativeName>
        <fullName>HGF/SF receptor</fullName>
    </alternativeName>
    <alternativeName>
        <fullName>Proto-oncogene c-Met</fullName>
    </alternativeName>
    <alternativeName>
        <fullName>Scatter factor receptor</fullName>
        <shortName>SF receptor</shortName>
    </alternativeName>
    <alternativeName>
        <fullName>Tyrosine-protein kinase Met</fullName>
    </alternativeName>
</protein>
<reference key="1">
    <citation type="submission" date="2006-01" db="EMBL/GenBank/DDBJ databases">
        <title>NISC comparative sequencing initiative.</title>
        <authorList>
            <person name="Antonellis A."/>
            <person name="Ayele K."/>
            <person name="Benjamin B."/>
            <person name="Blakesley R.W."/>
            <person name="Boakye A."/>
            <person name="Bouffard G.G."/>
            <person name="Brinkley C."/>
            <person name="Brooks S."/>
            <person name="Chu G."/>
            <person name="Coleman H."/>
            <person name="Engle J."/>
            <person name="Gestole M."/>
            <person name="Greene A."/>
            <person name="Guan X."/>
            <person name="Gupta J."/>
            <person name="Haghighi P."/>
            <person name="Han J."/>
            <person name="Hansen N."/>
            <person name="Ho S.-L."/>
            <person name="Hu P."/>
            <person name="Hunter G."/>
            <person name="Hurle B."/>
            <person name="Idol J.R."/>
            <person name="Kwong P."/>
            <person name="Laric P."/>
            <person name="Larson S."/>
            <person name="Lee-Lin S.-Q."/>
            <person name="Legaspi R."/>
            <person name="Madden M."/>
            <person name="Maduro Q.L."/>
            <person name="Maduro V.B."/>
            <person name="Margulies E.H."/>
            <person name="Masiello C."/>
            <person name="Maskeri B."/>
            <person name="McDowell J."/>
            <person name="Mojidi H.A."/>
            <person name="Mullikin J.C."/>
            <person name="Oestreicher J.S."/>
            <person name="Park M."/>
            <person name="Portnoy M.E."/>
            <person name="Prasad A."/>
            <person name="Puri O."/>
            <person name="Reddix-Dugue N."/>
            <person name="Schandler K."/>
            <person name="Schueler M.G."/>
            <person name="Sison C."/>
            <person name="Stantripop S."/>
            <person name="Stephen E."/>
            <person name="Taye A."/>
            <person name="Thomas J.W."/>
            <person name="Thomas P.J."/>
            <person name="Tsipouri V."/>
            <person name="Ung L."/>
            <person name="Vogt J.L."/>
            <person name="Wetherby K.D."/>
            <person name="Young A."/>
            <person name="Green E.D."/>
        </authorList>
    </citation>
    <scope>NUCLEOTIDE SEQUENCE [LARGE SCALE GENOMIC DNA]</scope>
</reference>
<sequence length="1390" mass="155480">MKAPAVLAPGILVLLFTLVQRSNGECKEALAKSEMNVNMKYQLPNFTAETLIQNVILHEHHIFLGATNYIYVLNEEDLQKVAEYKTGPVLEHPDCFPCQDCSSKANLSGGVWKDNINMALVVDTYYDDQLISCGSVNRGTCQRHVFPHNHTADIQSEVHCIFSPQIEEPSQCPDCVVSALGAKVLSSVKDRFINFFVGNTINSSYFPDHPLHSISVRRLKETKDGFMFLTDQSYIDVLPEFRDSYPIKYVHAFESNNFIYFLTVQRETLDAQTFHTRIIRFCSINSGLHSYMEMPLECILTEKRKKRSTKKEVFNILQAAYVSKPGAQLARQIGASLNDDILFGVFAQSKPDSAEPMDRSAMCAFPIKYVNDFFNKIVNKNNVRCLQHFYGPNHEHCFNRTLLRNSSGCEARRDEYRTEFTTALQRVDLFMGQFSEVLLTSISTFIKGDLTIANLGTSEGRFMQVVVSRSGPSTPHVNFLLDSHPVSPEVIVEHPLNQNGYTLVVTGKKITKIPLNGLGCRHFQSCSQCLSAPPFVQCGWCHDKCVRSEECSSGTWTQQICLPAIYKVFPSSAPLEGGTRLTICGWDFGFRRNNKFDLKKTRVLLGNESCTLTLSESTMNILKCTVGPAMNKHFNMSIIISNGHGTTQYSTFSYVDPVITGISPKYGPMAGGTLLTLTGNYLNSGNSRHISIGGKTCTLKSVSNSILECYTPAQTISTEFAVKLKIDLANRETSIFSYREDPIVYEIHPTKSFISGGSTITGVGKNLNSVSVPRMVINVHEAGRNFTVACQHRSNSEIICCTTPSLQQLNLQLPLKTKAFFMLDGILSKYFDLIYVHNPVFKPFEKPVMISMGNENVLEIKGNDIDPEAVKGEVLKVGNKSCENIHLHSEAVLCTVPNDLLKLNSELNIEWKQAISSTVLGKVIVQPDQNFTGLIAGVVSISIALLLLLGFFLWLKKRKQIKDLGSELVRYDARVHTPHLDRLVSARSVSPTTEMVSNESVDYRATFPEDQFPNSSQNGSCRQVQYPLTDMSPILTSGDSDISSPLLQNTVHIDLSALNPELVQAVQHVVIGPSSLIVHFNEVIGRGHFGCVYHGTLLDNDGKKIHCAVKSLNRITDIGEVSQFLTEGIIMKDFSHPNVLSLLGICLRSEGSPLVVLPYMKHGDLRNFIRNETHNPTVKDLIGFGLQVAKGMKYLASKKFVHRDLAARNCMLDEKFTVKVADFGLARDMYDKEYYSVHNKTGAKLPVKWMALESLQTQKFTTKSDVWSFGVLLWELMTRGAPPYPDVNTFDITVYLLQGRRLLQPEYCPDPLYEVMLKCWHPKAEMRPSFSELVSRISAIFSTFIGEHYVHVNATYVNVKCVAPYPSLLSSEDNADDEVDTRPASFWETS</sequence>
<evidence type="ECO:0000250" key="1"/>
<evidence type="ECO:0000250" key="2">
    <source>
        <dbReference type="UniProtKB" id="P08581"/>
    </source>
</evidence>
<evidence type="ECO:0000250" key="3">
    <source>
        <dbReference type="UniProtKB" id="P16056"/>
    </source>
</evidence>
<evidence type="ECO:0000255" key="4"/>
<evidence type="ECO:0000255" key="5">
    <source>
        <dbReference type="PROSITE-ProRule" id="PRU00159"/>
    </source>
</evidence>
<evidence type="ECO:0000255" key="6">
    <source>
        <dbReference type="PROSITE-ProRule" id="PRU00352"/>
    </source>
</evidence>
<evidence type="ECO:0000255" key="7">
    <source>
        <dbReference type="PROSITE-ProRule" id="PRU10028"/>
    </source>
</evidence>
<accession>Q2IBD8</accession>
<keyword id="KW-0067">ATP-binding</keyword>
<keyword id="KW-1015">Disulfide bond</keyword>
<keyword id="KW-0325">Glycoprotein</keyword>
<keyword id="KW-0418">Kinase</keyword>
<keyword id="KW-0472">Membrane</keyword>
<keyword id="KW-0547">Nucleotide-binding</keyword>
<keyword id="KW-0597">Phosphoprotein</keyword>
<keyword id="KW-0656">Proto-oncogene</keyword>
<keyword id="KW-0675">Receptor</keyword>
<keyword id="KW-1185">Reference proteome</keyword>
<keyword id="KW-0677">Repeat</keyword>
<keyword id="KW-0732">Signal</keyword>
<keyword id="KW-0808">Transferase</keyword>
<keyword id="KW-0812">Transmembrane</keyword>
<keyword id="KW-1133">Transmembrane helix</keyword>
<keyword id="KW-0829">Tyrosine-protein kinase</keyword>
<keyword id="KW-0832">Ubl conjugation</keyword>
<proteinExistence type="inferred from homology"/>
<gene>
    <name type="primary">MET</name>
</gene>
<organism>
    <name type="scientific">Pongo abelii</name>
    <name type="common">Sumatran orangutan</name>
    <name type="synonym">Pongo pygmaeus abelii</name>
    <dbReference type="NCBI Taxonomy" id="9601"/>
    <lineage>
        <taxon>Eukaryota</taxon>
        <taxon>Metazoa</taxon>
        <taxon>Chordata</taxon>
        <taxon>Craniata</taxon>
        <taxon>Vertebrata</taxon>
        <taxon>Euteleostomi</taxon>
        <taxon>Mammalia</taxon>
        <taxon>Eutheria</taxon>
        <taxon>Euarchontoglires</taxon>
        <taxon>Primates</taxon>
        <taxon>Haplorrhini</taxon>
        <taxon>Catarrhini</taxon>
        <taxon>Hominidae</taxon>
        <taxon>Pongo</taxon>
    </lineage>
</organism>
<feature type="signal peptide" evidence="4">
    <location>
        <begin position="1"/>
        <end position="24"/>
    </location>
</feature>
<feature type="chain" id="PRO_0000231600" description="Hepatocyte growth factor receptor">
    <location>
        <begin position="25"/>
        <end position="1390"/>
    </location>
</feature>
<feature type="topological domain" description="Extracellular" evidence="4">
    <location>
        <begin position="25"/>
        <end position="932"/>
    </location>
</feature>
<feature type="transmembrane region" description="Helical" evidence="4">
    <location>
        <begin position="933"/>
        <end position="955"/>
    </location>
</feature>
<feature type="topological domain" description="Cytoplasmic" evidence="4">
    <location>
        <begin position="956"/>
        <end position="1390"/>
    </location>
</feature>
<feature type="domain" description="Sema" evidence="6">
    <location>
        <begin position="27"/>
        <end position="515"/>
    </location>
</feature>
<feature type="domain" description="IPT/TIG 1">
    <location>
        <begin position="563"/>
        <end position="655"/>
    </location>
</feature>
<feature type="domain" description="IPT/TIG 2">
    <location>
        <begin position="657"/>
        <end position="739"/>
    </location>
</feature>
<feature type="domain" description="IPT/TIG 3">
    <location>
        <begin position="742"/>
        <end position="836"/>
    </location>
</feature>
<feature type="domain" description="Protein kinase" evidence="5">
    <location>
        <begin position="1078"/>
        <end position="1345"/>
    </location>
</feature>
<feature type="region of interest" description="Interaction with RANBP9" evidence="1">
    <location>
        <begin position="1212"/>
        <end position="1390"/>
    </location>
</feature>
<feature type="region of interest" description="Interaction with MUC20" evidence="1">
    <location>
        <begin position="1320"/>
        <end position="1359"/>
    </location>
</feature>
<feature type="active site" description="Proton acceptor" evidence="5 7">
    <location>
        <position position="1204"/>
    </location>
</feature>
<feature type="binding site" evidence="5">
    <location>
        <begin position="1084"/>
        <end position="1092"/>
    </location>
    <ligand>
        <name>ATP</name>
        <dbReference type="ChEBI" id="CHEBI:30616"/>
    </ligand>
</feature>
<feature type="binding site" evidence="5">
    <location>
        <position position="1110"/>
    </location>
    <ligand>
        <name>ATP</name>
        <dbReference type="ChEBI" id="CHEBI:30616"/>
    </ligand>
</feature>
<feature type="site" description="Cleavage" evidence="4">
    <location>
        <begin position="307"/>
        <end position="308"/>
    </location>
</feature>
<feature type="modified residue" description="Phosphoserine" evidence="2">
    <location>
        <position position="966"/>
    </location>
</feature>
<feature type="modified residue" description="Phosphothreonine" evidence="2">
    <location>
        <position position="977"/>
    </location>
</feature>
<feature type="modified residue" description="Phosphoserine" evidence="2">
    <location>
        <position position="990"/>
    </location>
</feature>
<feature type="modified residue" description="Phosphoserine" evidence="2">
    <location>
        <position position="997"/>
    </location>
</feature>
<feature type="modified residue" description="Phosphoserine" evidence="2">
    <location>
        <position position="1000"/>
    </location>
</feature>
<feature type="modified residue" description="Phosphotyrosine" evidence="2">
    <location>
        <position position="1003"/>
    </location>
</feature>
<feature type="modified residue" description="Phosphotyrosine" evidence="2">
    <location>
        <position position="1230"/>
    </location>
</feature>
<feature type="modified residue" description="Phosphotyrosine; by autocatalysis" evidence="2">
    <location>
        <position position="1234"/>
    </location>
</feature>
<feature type="modified residue" description="Phosphotyrosine; by autocatalysis" evidence="2">
    <location>
        <position position="1235"/>
    </location>
</feature>
<feature type="modified residue" description="Phosphothreonine" evidence="2">
    <location>
        <position position="1289"/>
    </location>
</feature>
<feature type="modified residue" description="Phosphotyrosine; by autocatalysis" evidence="2">
    <location>
        <position position="1349"/>
    </location>
</feature>
<feature type="modified residue" description="Phosphotyrosine; by autocatalysis" evidence="2">
    <location>
        <position position="1356"/>
    </location>
</feature>
<feature type="modified residue" description="Phosphotyrosine" evidence="2">
    <location>
        <position position="1365"/>
    </location>
</feature>
<feature type="glycosylation site" description="N-linked (GlcNAc...) asparagine" evidence="4">
    <location>
        <position position="45"/>
    </location>
</feature>
<feature type="glycosylation site" description="N-linked (GlcNAc...) asparagine" evidence="4">
    <location>
        <position position="106"/>
    </location>
</feature>
<feature type="glycosylation site" description="N-linked (GlcNAc...) asparagine" evidence="4">
    <location>
        <position position="149"/>
    </location>
</feature>
<feature type="glycosylation site" description="N-linked (GlcNAc...) asparagine" evidence="4">
    <location>
        <position position="202"/>
    </location>
</feature>
<feature type="glycosylation site" description="N-linked (GlcNAc...) asparagine" evidence="4">
    <location>
        <position position="399"/>
    </location>
</feature>
<feature type="glycosylation site" description="N-linked (GlcNAc...) asparagine" evidence="4">
    <location>
        <position position="405"/>
    </location>
</feature>
<feature type="glycosylation site" description="O-linked (Man) threonine" evidence="2">
    <location>
        <position position="582"/>
    </location>
</feature>
<feature type="glycosylation site" description="N-linked (GlcNAc...) asparagine" evidence="4">
    <location>
        <position position="607"/>
    </location>
</feature>
<feature type="glycosylation site" description="N-linked (GlcNAc...) asparagine" evidence="4">
    <location>
        <position position="635"/>
    </location>
</feature>
<feature type="glycosylation site" description="O-linked (Man) threonine" evidence="2">
    <location>
        <position position="676"/>
    </location>
</feature>
<feature type="glycosylation site" description="O-linked (Man) threonine" evidence="2">
    <location>
        <position position="761"/>
    </location>
</feature>
<feature type="glycosylation site" description="N-linked (GlcNAc...) asparagine" evidence="4">
    <location>
        <position position="785"/>
    </location>
</feature>
<feature type="glycosylation site" description="N-linked (GlcNAc...) asparagine" evidence="4">
    <location>
        <position position="879"/>
    </location>
</feature>
<feature type="glycosylation site" description="N-linked (GlcNAc...) asparagine" evidence="4">
    <location>
        <position position="930"/>
    </location>
</feature>
<feature type="disulfide bond" evidence="6">
    <location>
        <begin position="95"/>
        <end position="101"/>
    </location>
</feature>
<feature type="disulfide bond" evidence="6">
    <location>
        <begin position="98"/>
        <end position="160"/>
    </location>
</feature>
<feature type="disulfide bond" evidence="6">
    <location>
        <begin position="133"/>
        <end position="141"/>
    </location>
</feature>
<feature type="disulfide bond" evidence="6">
    <location>
        <begin position="172"/>
        <end position="175"/>
    </location>
</feature>
<feature type="disulfide bond" evidence="6">
    <location>
        <begin position="298"/>
        <end position="363"/>
    </location>
</feature>
<feature type="disulfide bond" evidence="6">
    <location>
        <begin position="385"/>
        <end position="397"/>
    </location>
</feature>
<feature type="disulfide bond" evidence="6">
    <location>
        <begin position="520"/>
        <end position="538"/>
    </location>
</feature>
<feature type="disulfide bond" evidence="6">
    <location>
        <begin position="526"/>
        <end position="561"/>
    </location>
</feature>
<feature type="disulfide bond" evidence="6">
    <location>
        <begin position="529"/>
        <end position="545"/>
    </location>
</feature>
<feature type="disulfide bond" evidence="6">
    <location>
        <begin position="541"/>
        <end position="551"/>
    </location>
</feature>
<dbReference type="EC" id="2.7.10.1"/>
<dbReference type="EMBL" id="DP000026">
    <property type="protein sequence ID" value="ABC87460.1"/>
    <property type="molecule type" value="Genomic_DNA"/>
</dbReference>
<dbReference type="RefSeq" id="NP_001162038.1">
    <property type="nucleotide sequence ID" value="NM_001168566.1"/>
</dbReference>
<dbReference type="SMR" id="Q2IBD8"/>
<dbReference type="FunCoup" id="Q2IBD8">
    <property type="interactions" value="996"/>
</dbReference>
<dbReference type="STRING" id="9601.ENSPPYP00000020106"/>
<dbReference type="GlyCosmos" id="Q2IBD8">
    <property type="glycosylation" value="11 sites, No reported glycans"/>
</dbReference>
<dbReference type="GeneID" id="100137030"/>
<dbReference type="KEGG" id="pon:100137030"/>
<dbReference type="CTD" id="4233"/>
<dbReference type="eggNOG" id="KOG1095">
    <property type="taxonomic scope" value="Eukaryota"/>
</dbReference>
<dbReference type="eggNOG" id="KOG3610">
    <property type="taxonomic scope" value="Eukaryota"/>
</dbReference>
<dbReference type="HOGENOM" id="CLU_005158_0_0_1"/>
<dbReference type="InParanoid" id="Q2IBD8"/>
<dbReference type="OrthoDB" id="9985181at2759"/>
<dbReference type="Proteomes" id="UP000001595">
    <property type="component" value="Unplaced"/>
</dbReference>
<dbReference type="GO" id="GO:0005886">
    <property type="term" value="C:plasma membrane"/>
    <property type="evidence" value="ECO:0007669"/>
    <property type="project" value="TreeGrafter"/>
</dbReference>
<dbReference type="GO" id="GO:0002116">
    <property type="term" value="C:semaphorin receptor complex"/>
    <property type="evidence" value="ECO:0007669"/>
    <property type="project" value="TreeGrafter"/>
</dbReference>
<dbReference type="GO" id="GO:0005524">
    <property type="term" value="F:ATP binding"/>
    <property type="evidence" value="ECO:0007669"/>
    <property type="project" value="UniProtKB-KW"/>
</dbReference>
<dbReference type="GO" id="GO:0017154">
    <property type="term" value="F:semaphorin receptor activity"/>
    <property type="evidence" value="ECO:0007669"/>
    <property type="project" value="InterPro"/>
</dbReference>
<dbReference type="GO" id="GO:0004714">
    <property type="term" value="F:transmembrane receptor protein tyrosine kinase activity"/>
    <property type="evidence" value="ECO:0007669"/>
    <property type="project" value="UniProtKB-EC"/>
</dbReference>
<dbReference type="GO" id="GO:0007169">
    <property type="term" value="P:cell surface receptor protein tyrosine kinase signaling pathway"/>
    <property type="evidence" value="ECO:0007669"/>
    <property type="project" value="InterPro"/>
</dbReference>
<dbReference type="GO" id="GO:0050918">
    <property type="term" value="P:positive chemotaxis"/>
    <property type="evidence" value="ECO:0000250"/>
    <property type="project" value="UniProtKB"/>
</dbReference>
<dbReference type="GO" id="GO:2001028">
    <property type="term" value="P:positive regulation of endothelial cell chemotaxis"/>
    <property type="evidence" value="ECO:0000250"/>
    <property type="project" value="UniProtKB"/>
</dbReference>
<dbReference type="GO" id="GO:0071526">
    <property type="term" value="P:semaphorin-plexin signaling pathway"/>
    <property type="evidence" value="ECO:0000250"/>
    <property type="project" value="UniProtKB"/>
</dbReference>
<dbReference type="CDD" id="cd00603">
    <property type="entry name" value="IPT_PCSR"/>
    <property type="match status" value="1"/>
</dbReference>
<dbReference type="CDD" id="cd01180">
    <property type="entry name" value="IPT_plexin_repeat1"/>
    <property type="match status" value="1"/>
</dbReference>
<dbReference type="CDD" id="cd01179">
    <property type="entry name" value="IPT_plexin_repeat2"/>
    <property type="match status" value="1"/>
</dbReference>
<dbReference type="CDD" id="cd01181">
    <property type="entry name" value="IPT_plexin_repeat3"/>
    <property type="match status" value="1"/>
</dbReference>
<dbReference type="CDD" id="cd05058">
    <property type="entry name" value="PTKc_Met_Ron"/>
    <property type="match status" value="1"/>
</dbReference>
<dbReference type="CDD" id="cd11278">
    <property type="entry name" value="Sema_MET"/>
    <property type="match status" value="1"/>
</dbReference>
<dbReference type="FunFam" id="1.10.510.10:FF:000093">
    <property type="entry name" value="Hepatocyte growth factor receptor"/>
    <property type="match status" value="1"/>
</dbReference>
<dbReference type="FunFam" id="2.130.10.10:FF:000088">
    <property type="entry name" value="Hepatocyte growth factor receptor"/>
    <property type="match status" value="1"/>
</dbReference>
<dbReference type="FunFam" id="2.60.40.10:FF:000213">
    <property type="entry name" value="Hepatocyte growth factor receptor"/>
    <property type="match status" value="1"/>
</dbReference>
<dbReference type="FunFam" id="2.60.40.10:FF:000400">
    <property type="entry name" value="Hepatocyte growth factor receptor"/>
    <property type="match status" value="1"/>
</dbReference>
<dbReference type="FunFam" id="2.60.40.10:FF:002708">
    <property type="entry name" value="Hepatocyte growth factor receptor"/>
    <property type="match status" value="1"/>
</dbReference>
<dbReference type="FunFam" id="3.30.200.20:FF:000188">
    <property type="entry name" value="Hepatocyte growth factor receptor"/>
    <property type="match status" value="1"/>
</dbReference>
<dbReference type="FunFam" id="3.30.1680.10:FF:000006">
    <property type="entry name" value="Macrophage-stimulating 1 receptor b"/>
    <property type="match status" value="1"/>
</dbReference>
<dbReference type="Gene3D" id="2.60.40.10">
    <property type="entry name" value="Immunoglobulins"/>
    <property type="match status" value="3"/>
</dbReference>
<dbReference type="Gene3D" id="3.30.200.20">
    <property type="entry name" value="Phosphorylase Kinase, domain 1"/>
    <property type="match status" value="1"/>
</dbReference>
<dbReference type="Gene3D" id="1.10.510.10">
    <property type="entry name" value="Transferase(Phosphotransferase) domain 1"/>
    <property type="match status" value="1"/>
</dbReference>
<dbReference type="Gene3D" id="2.130.10.10">
    <property type="entry name" value="YVTN repeat-like/Quinoprotein amine dehydrogenase"/>
    <property type="match status" value="1"/>
</dbReference>
<dbReference type="InterPro" id="IPR013783">
    <property type="entry name" value="Ig-like_fold"/>
</dbReference>
<dbReference type="InterPro" id="IPR014756">
    <property type="entry name" value="Ig_E-set"/>
</dbReference>
<dbReference type="InterPro" id="IPR002909">
    <property type="entry name" value="IPT_dom"/>
</dbReference>
<dbReference type="InterPro" id="IPR011009">
    <property type="entry name" value="Kinase-like_dom_sf"/>
</dbReference>
<dbReference type="InterPro" id="IPR031148">
    <property type="entry name" value="Plexin"/>
</dbReference>
<dbReference type="InterPro" id="IPR002165">
    <property type="entry name" value="Plexin_repeat"/>
</dbReference>
<dbReference type="InterPro" id="IPR000719">
    <property type="entry name" value="Prot_kinase_dom"/>
</dbReference>
<dbReference type="InterPro" id="IPR017441">
    <property type="entry name" value="Protein_kinase_ATP_BS"/>
</dbReference>
<dbReference type="InterPro" id="IPR016201">
    <property type="entry name" value="PSI"/>
</dbReference>
<dbReference type="InterPro" id="IPR001627">
    <property type="entry name" value="Semap_dom"/>
</dbReference>
<dbReference type="InterPro" id="IPR036352">
    <property type="entry name" value="Semap_dom_sf"/>
</dbReference>
<dbReference type="InterPro" id="IPR001245">
    <property type="entry name" value="Ser-Thr/Tyr_kinase_cat_dom"/>
</dbReference>
<dbReference type="InterPro" id="IPR008266">
    <property type="entry name" value="Tyr_kinase_AS"/>
</dbReference>
<dbReference type="InterPro" id="IPR020635">
    <property type="entry name" value="Tyr_kinase_cat_dom"/>
</dbReference>
<dbReference type="InterPro" id="IPR016244">
    <property type="entry name" value="Tyr_kinase_HGF/MSP_rcpt"/>
</dbReference>
<dbReference type="InterPro" id="IPR015943">
    <property type="entry name" value="WD40/YVTN_repeat-like_dom_sf"/>
</dbReference>
<dbReference type="PANTHER" id="PTHR22625:SF61">
    <property type="entry name" value="HEPATOCYTE GROWTH FACTOR RECEPTOR"/>
    <property type="match status" value="1"/>
</dbReference>
<dbReference type="PANTHER" id="PTHR22625">
    <property type="entry name" value="PLEXIN"/>
    <property type="match status" value="1"/>
</dbReference>
<dbReference type="Pfam" id="PF07714">
    <property type="entry name" value="PK_Tyr_Ser-Thr"/>
    <property type="match status" value="1"/>
</dbReference>
<dbReference type="Pfam" id="PF01437">
    <property type="entry name" value="PSI"/>
    <property type="match status" value="1"/>
</dbReference>
<dbReference type="Pfam" id="PF01403">
    <property type="entry name" value="Sema"/>
    <property type="match status" value="1"/>
</dbReference>
<dbReference type="Pfam" id="PF01833">
    <property type="entry name" value="TIG"/>
    <property type="match status" value="3"/>
</dbReference>
<dbReference type="PIRSF" id="PIRSF000617">
    <property type="entry name" value="TyrPK_HGF-R"/>
    <property type="match status" value="1"/>
</dbReference>
<dbReference type="PRINTS" id="PR00109">
    <property type="entry name" value="TYRKINASE"/>
</dbReference>
<dbReference type="SMART" id="SM00429">
    <property type="entry name" value="IPT"/>
    <property type="match status" value="4"/>
</dbReference>
<dbReference type="SMART" id="SM00423">
    <property type="entry name" value="PSI"/>
    <property type="match status" value="1"/>
</dbReference>
<dbReference type="SMART" id="SM00630">
    <property type="entry name" value="Sema"/>
    <property type="match status" value="1"/>
</dbReference>
<dbReference type="SMART" id="SM00219">
    <property type="entry name" value="TyrKc"/>
    <property type="match status" value="1"/>
</dbReference>
<dbReference type="SUPFAM" id="SSF81296">
    <property type="entry name" value="E set domains"/>
    <property type="match status" value="3"/>
</dbReference>
<dbReference type="SUPFAM" id="SSF103575">
    <property type="entry name" value="Plexin repeat"/>
    <property type="match status" value="1"/>
</dbReference>
<dbReference type="SUPFAM" id="SSF56112">
    <property type="entry name" value="Protein kinase-like (PK-like)"/>
    <property type="match status" value="1"/>
</dbReference>
<dbReference type="SUPFAM" id="SSF101912">
    <property type="entry name" value="Sema domain"/>
    <property type="match status" value="1"/>
</dbReference>
<dbReference type="PROSITE" id="PS00107">
    <property type="entry name" value="PROTEIN_KINASE_ATP"/>
    <property type="match status" value="1"/>
</dbReference>
<dbReference type="PROSITE" id="PS50011">
    <property type="entry name" value="PROTEIN_KINASE_DOM"/>
    <property type="match status" value="1"/>
</dbReference>
<dbReference type="PROSITE" id="PS00109">
    <property type="entry name" value="PROTEIN_KINASE_TYR"/>
    <property type="match status" value="1"/>
</dbReference>
<dbReference type="PROSITE" id="PS51004">
    <property type="entry name" value="SEMA"/>
    <property type="match status" value="1"/>
</dbReference>